<gene>
    <name evidence="1" type="primary">pyrB</name>
    <name type="ordered locus">LI0818</name>
</gene>
<proteinExistence type="inferred from homology"/>
<reference key="1">
    <citation type="submission" date="2005-11" db="EMBL/GenBank/DDBJ databases">
        <title>The complete genome sequence of Lawsonia intracellularis: the causative agent of proliferative enteropathy.</title>
        <authorList>
            <person name="Kaur K."/>
            <person name="Zhang Q."/>
            <person name="Beckler D."/>
            <person name="Munir S."/>
            <person name="Li L."/>
            <person name="Kinsley K."/>
            <person name="Herron L."/>
            <person name="Peterson A."/>
            <person name="May B."/>
            <person name="Singh S."/>
            <person name="Gebhart C."/>
            <person name="Kapur V."/>
        </authorList>
    </citation>
    <scope>NUCLEOTIDE SEQUENCE [LARGE SCALE GENOMIC DNA]</scope>
    <source>
        <strain>PHE/MN1-00</strain>
    </source>
</reference>
<protein>
    <recommendedName>
        <fullName evidence="1">Aspartate carbamoyltransferase catalytic subunit</fullName>
        <ecNumber evidence="1">2.1.3.2</ecNumber>
    </recommendedName>
    <alternativeName>
        <fullName evidence="1">Aspartate transcarbamylase</fullName>
        <shortName evidence="1">ATCase</shortName>
    </alternativeName>
</protein>
<organism>
    <name type="scientific">Lawsonia intracellularis (strain PHE/MN1-00)</name>
    <dbReference type="NCBI Taxonomy" id="363253"/>
    <lineage>
        <taxon>Bacteria</taxon>
        <taxon>Pseudomonadati</taxon>
        <taxon>Thermodesulfobacteriota</taxon>
        <taxon>Desulfovibrionia</taxon>
        <taxon>Desulfovibrionales</taxon>
        <taxon>Desulfovibrionaceae</taxon>
        <taxon>Lawsonia</taxon>
    </lineage>
</organism>
<comment type="function">
    <text evidence="1">Catalyzes the condensation of carbamoyl phosphate and aspartate to form carbamoyl aspartate and inorganic phosphate, the committed step in the de novo pyrimidine nucleotide biosynthesis pathway.</text>
</comment>
<comment type="catalytic activity">
    <reaction evidence="1">
        <text>carbamoyl phosphate + L-aspartate = N-carbamoyl-L-aspartate + phosphate + H(+)</text>
        <dbReference type="Rhea" id="RHEA:20013"/>
        <dbReference type="ChEBI" id="CHEBI:15378"/>
        <dbReference type="ChEBI" id="CHEBI:29991"/>
        <dbReference type="ChEBI" id="CHEBI:32814"/>
        <dbReference type="ChEBI" id="CHEBI:43474"/>
        <dbReference type="ChEBI" id="CHEBI:58228"/>
        <dbReference type="EC" id="2.1.3.2"/>
    </reaction>
</comment>
<comment type="pathway">
    <text evidence="1">Pyrimidine metabolism; UMP biosynthesis via de novo pathway; (S)-dihydroorotate from bicarbonate: step 2/3.</text>
</comment>
<comment type="subunit">
    <text evidence="1">Heterododecamer (2C3:3R2) of six catalytic PyrB chains organized as two trimers (C3), and six regulatory PyrI chains organized as three dimers (R2).</text>
</comment>
<comment type="similarity">
    <text evidence="1">Belongs to the aspartate/ornithine carbamoyltransferase superfamily. ATCase family.</text>
</comment>
<dbReference type="EC" id="2.1.3.2" evidence="1"/>
<dbReference type="EMBL" id="AM180252">
    <property type="protein sequence ID" value="CAJ54872.1"/>
    <property type="molecule type" value="Genomic_DNA"/>
</dbReference>
<dbReference type="RefSeq" id="WP_011526901.1">
    <property type="nucleotide sequence ID" value="NC_008011.1"/>
</dbReference>
<dbReference type="SMR" id="Q1MQ55"/>
<dbReference type="STRING" id="363253.LI0818"/>
<dbReference type="KEGG" id="lip:LI0818"/>
<dbReference type="eggNOG" id="COG0540">
    <property type="taxonomic scope" value="Bacteria"/>
</dbReference>
<dbReference type="HOGENOM" id="CLU_043846_2_0_7"/>
<dbReference type="OrthoDB" id="9774690at2"/>
<dbReference type="UniPathway" id="UPA00070">
    <property type="reaction ID" value="UER00116"/>
</dbReference>
<dbReference type="Proteomes" id="UP000002430">
    <property type="component" value="Chromosome"/>
</dbReference>
<dbReference type="GO" id="GO:0005829">
    <property type="term" value="C:cytosol"/>
    <property type="evidence" value="ECO:0007669"/>
    <property type="project" value="TreeGrafter"/>
</dbReference>
<dbReference type="GO" id="GO:0016597">
    <property type="term" value="F:amino acid binding"/>
    <property type="evidence" value="ECO:0007669"/>
    <property type="project" value="InterPro"/>
</dbReference>
<dbReference type="GO" id="GO:0004070">
    <property type="term" value="F:aspartate carbamoyltransferase activity"/>
    <property type="evidence" value="ECO:0007669"/>
    <property type="project" value="UniProtKB-UniRule"/>
</dbReference>
<dbReference type="GO" id="GO:0006207">
    <property type="term" value="P:'de novo' pyrimidine nucleobase biosynthetic process"/>
    <property type="evidence" value="ECO:0007669"/>
    <property type="project" value="InterPro"/>
</dbReference>
<dbReference type="GO" id="GO:0044205">
    <property type="term" value="P:'de novo' UMP biosynthetic process"/>
    <property type="evidence" value="ECO:0007669"/>
    <property type="project" value="UniProtKB-UniRule"/>
</dbReference>
<dbReference type="GO" id="GO:0006520">
    <property type="term" value="P:amino acid metabolic process"/>
    <property type="evidence" value="ECO:0007669"/>
    <property type="project" value="InterPro"/>
</dbReference>
<dbReference type="Gene3D" id="3.40.50.1370">
    <property type="entry name" value="Aspartate/ornithine carbamoyltransferase"/>
    <property type="match status" value="2"/>
</dbReference>
<dbReference type="HAMAP" id="MF_00001">
    <property type="entry name" value="Asp_carb_tr"/>
    <property type="match status" value="1"/>
</dbReference>
<dbReference type="InterPro" id="IPR006132">
    <property type="entry name" value="Asp/Orn_carbamoyltranf_P-bd"/>
</dbReference>
<dbReference type="InterPro" id="IPR006130">
    <property type="entry name" value="Asp/Orn_carbamoylTrfase"/>
</dbReference>
<dbReference type="InterPro" id="IPR036901">
    <property type="entry name" value="Asp/Orn_carbamoylTrfase_sf"/>
</dbReference>
<dbReference type="InterPro" id="IPR002082">
    <property type="entry name" value="Asp_carbamoyltransf"/>
</dbReference>
<dbReference type="InterPro" id="IPR006131">
    <property type="entry name" value="Asp_carbamoyltransf_Asp/Orn-bd"/>
</dbReference>
<dbReference type="NCBIfam" id="TIGR00670">
    <property type="entry name" value="asp_carb_tr"/>
    <property type="match status" value="1"/>
</dbReference>
<dbReference type="NCBIfam" id="NF002032">
    <property type="entry name" value="PRK00856.1"/>
    <property type="match status" value="1"/>
</dbReference>
<dbReference type="PANTHER" id="PTHR45753:SF6">
    <property type="entry name" value="ASPARTATE CARBAMOYLTRANSFERASE"/>
    <property type="match status" value="1"/>
</dbReference>
<dbReference type="PANTHER" id="PTHR45753">
    <property type="entry name" value="ORNITHINE CARBAMOYLTRANSFERASE, MITOCHONDRIAL"/>
    <property type="match status" value="1"/>
</dbReference>
<dbReference type="Pfam" id="PF00185">
    <property type="entry name" value="OTCace"/>
    <property type="match status" value="1"/>
</dbReference>
<dbReference type="Pfam" id="PF02729">
    <property type="entry name" value="OTCace_N"/>
    <property type="match status" value="1"/>
</dbReference>
<dbReference type="PRINTS" id="PR00100">
    <property type="entry name" value="AOTCASE"/>
</dbReference>
<dbReference type="PRINTS" id="PR00101">
    <property type="entry name" value="ATCASE"/>
</dbReference>
<dbReference type="SUPFAM" id="SSF53671">
    <property type="entry name" value="Aspartate/ornithine carbamoyltransferase"/>
    <property type="match status" value="1"/>
</dbReference>
<dbReference type="PROSITE" id="PS00097">
    <property type="entry name" value="CARBAMOYLTRANSFERASE"/>
    <property type="match status" value="1"/>
</dbReference>
<keyword id="KW-0665">Pyrimidine biosynthesis</keyword>
<keyword id="KW-1185">Reference proteome</keyword>
<keyword id="KW-0808">Transferase</keyword>
<sequence>MQEKNVFNWLHKDLLDIDQLSQTDIFNILNTASSLDETNSRVIKKLPTLRGKNIILFFAEPSTRTKVSFEIAGKRLSADTIGVNASSSSIQKGESLKDTALTLQAMSPDVIVLRHSSSGAALFLADLLECSVINAGDGWHAHPTQALLDVFSLWKVWGNHFHGKEVLIVGDTAHSRVCRSNVTLLNLMGVKVRLCSPRTLLPSGVEHWPVEIYTDLHQAICGVDAVICLRVQLERHKKSFFPSIEEYAKRFCLTPKHLMSAKTEAKVLHPGPFLRGVDLASSLIETPQSLIFDQVSAGIAIRMAILFLFLTCNDL</sequence>
<accession>Q1MQ55</accession>
<name>PYRB_LAWIP</name>
<feature type="chain" id="PRO_0000329108" description="Aspartate carbamoyltransferase catalytic subunit">
    <location>
        <begin position="1"/>
        <end position="315"/>
    </location>
</feature>
<feature type="binding site" evidence="1">
    <location>
        <position position="64"/>
    </location>
    <ligand>
        <name>carbamoyl phosphate</name>
        <dbReference type="ChEBI" id="CHEBI:58228"/>
    </ligand>
</feature>
<feature type="binding site" evidence="1">
    <location>
        <position position="65"/>
    </location>
    <ligand>
        <name>carbamoyl phosphate</name>
        <dbReference type="ChEBI" id="CHEBI:58228"/>
    </ligand>
</feature>
<feature type="binding site" evidence="1">
    <location>
        <position position="92"/>
    </location>
    <ligand>
        <name>L-aspartate</name>
        <dbReference type="ChEBI" id="CHEBI:29991"/>
    </ligand>
</feature>
<feature type="binding site" evidence="1">
    <location>
        <position position="114"/>
    </location>
    <ligand>
        <name>carbamoyl phosphate</name>
        <dbReference type="ChEBI" id="CHEBI:58228"/>
    </ligand>
</feature>
<feature type="binding site" evidence="1">
    <location>
        <position position="142"/>
    </location>
    <ligand>
        <name>carbamoyl phosphate</name>
        <dbReference type="ChEBI" id="CHEBI:58228"/>
    </ligand>
</feature>
<feature type="binding site" evidence="1">
    <location>
        <position position="145"/>
    </location>
    <ligand>
        <name>carbamoyl phosphate</name>
        <dbReference type="ChEBI" id="CHEBI:58228"/>
    </ligand>
</feature>
<feature type="binding site" evidence="1">
    <location>
        <position position="176"/>
    </location>
    <ligand>
        <name>L-aspartate</name>
        <dbReference type="ChEBI" id="CHEBI:29991"/>
    </ligand>
</feature>
<feature type="binding site" evidence="1">
    <location>
        <position position="230"/>
    </location>
    <ligand>
        <name>L-aspartate</name>
        <dbReference type="ChEBI" id="CHEBI:29991"/>
    </ligand>
</feature>
<feature type="binding site" evidence="1">
    <location>
        <position position="271"/>
    </location>
    <ligand>
        <name>carbamoyl phosphate</name>
        <dbReference type="ChEBI" id="CHEBI:58228"/>
    </ligand>
</feature>
<feature type="binding site" evidence="1">
    <location>
        <position position="272"/>
    </location>
    <ligand>
        <name>carbamoyl phosphate</name>
        <dbReference type="ChEBI" id="CHEBI:58228"/>
    </ligand>
</feature>
<evidence type="ECO:0000255" key="1">
    <source>
        <dbReference type="HAMAP-Rule" id="MF_00001"/>
    </source>
</evidence>